<feature type="chain" id="PRO_0000064243" description="Glycylpeptide N-tetradecanoyltransferase">
    <location>
        <begin position="1"/>
        <end position="447"/>
    </location>
</feature>
<feature type="active site" description="Proton acceptor; via carboxylate" evidence="1">
    <location>
        <position position="447"/>
    </location>
</feature>
<feature type="binding site" evidence="2">
    <location>
        <begin position="38"/>
        <end position="41"/>
    </location>
    <ligand>
        <name>tetradecanoyl-CoA</name>
        <dbReference type="ChEBI" id="CHEBI:57385"/>
    </ligand>
</feature>
<feature type="binding site" evidence="2">
    <location>
        <begin position="171"/>
        <end position="173"/>
    </location>
    <ligand>
        <name>tetradecanoyl-CoA</name>
        <dbReference type="ChEBI" id="CHEBI:57385"/>
    </ligand>
</feature>
<feature type="binding site" evidence="2">
    <location>
        <begin position="179"/>
        <end position="183"/>
    </location>
    <ligand>
        <name>tetradecanoyl-CoA</name>
        <dbReference type="ChEBI" id="CHEBI:57385"/>
    </ligand>
</feature>
<sequence length="447" mass="52323">MSEEDKSKKLEELLKLLKVHDGDLSKFTSQQRKDMNEYKFWKTQPVTKFDEVIKKEGPIDSSKRPEDIPDTPLPLLGDFEWCTVDVNDEKQLEDVYVLLNENYVEDKDSTFRFNYSRDFLNWGLKPPGWKEEWQVGVRVKETKRLVGFISAIPTNLQVRGNDVRSVEINFLCVHKKLRSKRLAPILIKEVTRRVNKYDIWQALHTGGVVLPSPVSSCRYAHRPLNWSKLYDVEFTALPANATKTQMIAKYTLPKTPISNIKLMEERHVDEAFELFNKYQQRFELRPNFDKEEFRHWILTREDVVYSYIIENDEGKVTDFVSFYSLPFTIINNPLYKDLGIGYMFYYASDADFGYDRFSAEGTERLRKRLNLLINDACILARNLKMDVFNALTSQDNALFLEDLKFGPGDGFLNFYLFNYRCFPITGGIKEDQTFDVEKRSNVGVVLL</sequence>
<proteinExistence type="inferred from homology"/>
<reference key="1">
    <citation type="journal article" date="2004" name="Nature">
        <title>Genome evolution in yeasts.</title>
        <authorList>
            <person name="Dujon B."/>
            <person name="Sherman D."/>
            <person name="Fischer G."/>
            <person name="Durrens P."/>
            <person name="Casaregola S."/>
            <person name="Lafontaine I."/>
            <person name="de Montigny J."/>
            <person name="Marck C."/>
            <person name="Neuveglise C."/>
            <person name="Talla E."/>
            <person name="Goffard N."/>
            <person name="Frangeul L."/>
            <person name="Aigle M."/>
            <person name="Anthouard V."/>
            <person name="Babour A."/>
            <person name="Barbe V."/>
            <person name="Barnay S."/>
            <person name="Blanchin S."/>
            <person name="Beckerich J.-M."/>
            <person name="Beyne E."/>
            <person name="Bleykasten C."/>
            <person name="Boisrame A."/>
            <person name="Boyer J."/>
            <person name="Cattolico L."/>
            <person name="Confanioleri F."/>
            <person name="de Daruvar A."/>
            <person name="Despons L."/>
            <person name="Fabre E."/>
            <person name="Fairhead C."/>
            <person name="Ferry-Dumazet H."/>
            <person name="Groppi A."/>
            <person name="Hantraye F."/>
            <person name="Hennequin C."/>
            <person name="Jauniaux N."/>
            <person name="Joyet P."/>
            <person name="Kachouri R."/>
            <person name="Kerrest A."/>
            <person name="Koszul R."/>
            <person name="Lemaire M."/>
            <person name="Lesur I."/>
            <person name="Ma L."/>
            <person name="Muller H."/>
            <person name="Nicaud J.-M."/>
            <person name="Nikolski M."/>
            <person name="Oztas S."/>
            <person name="Ozier-Kalogeropoulos O."/>
            <person name="Pellenz S."/>
            <person name="Potier S."/>
            <person name="Richard G.-F."/>
            <person name="Straub M.-L."/>
            <person name="Suleau A."/>
            <person name="Swennen D."/>
            <person name="Tekaia F."/>
            <person name="Wesolowski-Louvel M."/>
            <person name="Westhof E."/>
            <person name="Wirth B."/>
            <person name="Zeniou-Meyer M."/>
            <person name="Zivanovic Y."/>
            <person name="Bolotin-Fukuhara M."/>
            <person name="Thierry A."/>
            <person name="Bouchier C."/>
            <person name="Caudron B."/>
            <person name="Scarpelli C."/>
            <person name="Gaillardin C."/>
            <person name="Weissenbach J."/>
            <person name="Wincker P."/>
            <person name="Souciet J.-L."/>
        </authorList>
    </citation>
    <scope>NUCLEOTIDE SEQUENCE [LARGE SCALE GENOMIC DNA]</scope>
    <source>
        <strain>ATCC 8585 / CBS 2359 / DSM 70799 / NBRC 1267 / NRRL Y-1140 / WM37</strain>
    </source>
</reference>
<name>NMT_KLULA</name>
<dbReference type="EC" id="2.3.1.97"/>
<dbReference type="EMBL" id="CR382125">
    <property type="protein sequence ID" value="CAG99922.1"/>
    <property type="molecule type" value="Genomic_DNA"/>
</dbReference>
<dbReference type="RefSeq" id="XP_454835.1">
    <property type="nucleotide sequence ID" value="XM_454835.1"/>
</dbReference>
<dbReference type="SMR" id="Q6CMK4"/>
<dbReference type="FunCoup" id="Q6CMK4">
    <property type="interactions" value="986"/>
</dbReference>
<dbReference type="STRING" id="284590.Q6CMK4"/>
<dbReference type="PaxDb" id="284590-Q6CMK4"/>
<dbReference type="KEGG" id="kla:KLLA0_E19537g"/>
<dbReference type="eggNOG" id="KOG2779">
    <property type="taxonomic scope" value="Eukaryota"/>
</dbReference>
<dbReference type="HOGENOM" id="CLU_022882_2_0_1"/>
<dbReference type="InParanoid" id="Q6CMK4"/>
<dbReference type="OMA" id="GWKRDWH"/>
<dbReference type="Proteomes" id="UP000000598">
    <property type="component" value="Chromosome E"/>
</dbReference>
<dbReference type="GO" id="GO:0005737">
    <property type="term" value="C:cytoplasm"/>
    <property type="evidence" value="ECO:0007669"/>
    <property type="project" value="UniProtKB-SubCell"/>
</dbReference>
<dbReference type="GO" id="GO:0004379">
    <property type="term" value="F:glycylpeptide N-tetradecanoyltransferase activity"/>
    <property type="evidence" value="ECO:0007669"/>
    <property type="project" value="UniProtKB-EC"/>
</dbReference>
<dbReference type="FunFam" id="3.40.630.30:FF:000042">
    <property type="entry name" value="Glycylpeptide N-tetradecanoyltransferase"/>
    <property type="match status" value="1"/>
</dbReference>
<dbReference type="FunFam" id="3.40.630.30:FF:000056">
    <property type="entry name" value="Glycylpeptide N-tetradecanoyltransferase"/>
    <property type="match status" value="1"/>
</dbReference>
<dbReference type="Gene3D" id="3.40.630.30">
    <property type="match status" value="2"/>
</dbReference>
<dbReference type="InterPro" id="IPR016181">
    <property type="entry name" value="Acyl_CoA_acyltransferase"/>
</dbReference>
<dbReference type="InterPro" id="IPR000903">
    <property type="entry name" value="NMT"/>
</dbReference>
<dbReference type="InterPro" id="IPR022677">
    <property type="entry name" value="NMT_C"/>
</dbReference>
<dbReference type="InterPro" id="IPR022678">
    <property type="entry name" value="NMT_CS"/>
</dbReference>
<dbReference type="InterPro" id="IPR022676">
    <property type="entry name" value="NMT_N"/>
</dbReference>
<dbReference type="PANTHER" id="PTHR11377:SF5">
    <property type="entry name" value="GLYCYLPEPTIDE N-TETRADECANOYLTRANSFERASE"/>
    <property type="match status" value="1"/>
</dbReference>
<dbReference type="PANTHER" id="PTHR11377">
    <property type="entry name" value="N-MYRISTOYL TRANSFERASE"/>
    <property type="match status" value="1"/>
</dbReference>
<dbReference type="Pfam" id="PF01233">
    <property type="entry name" value="NMT"/>
    <property type="match status" value="1"/>
</dbReference>
<dbReference type="Pfam" id="PF02799">
    <property type="entry name" value="NMT_C"/>
    <property type="match status" value="1"/>
</dbReference>
<dbReference type="PIRSF" id="PIRSF015892">
    <property type="entry name" value="N-myristl_transf"/>
    <property type="match status" value="1"/>
</dbReference>
<dbReference type="SUPFAM" id="SSF55729">
    <property type="entry name" value="Acyl-CoA N-acyltransferases (Nat)"/>
    <property type="match status" value="2"/>
</dbReference>
<dbReference type="PROSITE" id="PS00975">
    <property type="entry name" value="NMT_1"/>
    <property type="match status" value="1"/>
</dbReference>
<dbReference type="PROSITE" id="PS00976">
    <property type="entry name" value="NMT_2"/>
    <property type="match status" value="1"/>
</dbReference>
<gene>
    <name type="primary">NMT1</name>
    <name type="ordered locus">KLLA0E19635g</name>
</gene>
<organism>
    <name type="scientific">Kluyveromyces lactis (strain ATCC 8585 / CBS 2359 / DSM 70799 / NBRC 1267 / NRRL Y-1140 / WM37)</name>
    <name type="common">Yeast</name>
    <name type="synonym">Candida sphaerica</name>
    <dbReference type="NCBI Taxonomy" id="284590"/>
    <lineage>
        <taxon>Eukaryota</taxon>
        <taxon>Fungi</taxon>
        <taxon>Dikarya</taxon>
        <taxon>Ascomycota</taxon>
        <taxon>Saccharomycotina</taxon>
        <taxon>Saccharomycetes</taxon>
        <taxon>Saccharomycetales</taxon>
        <taxon>Saccharomycetaceae</taxon>
        <taxon>Kluyveromyces</taxon>
    </lineage>
</organism>
<keyword id="KW-0012">Acyltransferase</keyword>
<keyword id="KW-0963">Cytoplasm</keyword>
<keyword id="KW-1185">Reference proteome</keyword>
<keyword id="KW-0808">Transferase</keyword>
<evidence type="ECO:0000250" key="1"/>
<evidence type="ECO:0000250" key="2">
    <source>
        <dbReference type="UniProtKB" id="P14743"/>
    </source>
</evidence>
<evidence type="ECO:0000305" key="3"/>
<comment type="function">
    <text evidence="1">Adds a myristoyl group to the N-terminal glycine residue of certain cellular proteins.</text>
</comment>
<comment type="catalytic activity">
    <reaction>
        <text>N-terminal glycyl-[protein] + tetradecanoyl-CoA = N-tetradecanoylglycyl-[protein] + CoA + H(+)</text>
        <dbReference type="Rhea" id="RHEA:15521"/>
        <dbReference type="Rhea" id="RHEA-COMP:12666"/>
        <dbReference type="Rhea" id="RHEA-COMP:12667"/>
        <dbReference type="ChEBI" id="CHEBI:15378"/>
        <dbReference type="ChEBI" id="CHEBI:57287"/>
        <dbReference type="ChEBI" id="CHEBI:57385"/>
        <dbReference type="ChEBI" id="CHEBI:64723"/>
        <dbReference type="ChEBI" id="CHEBI:133050"/>
        <dbReference type="EC" id="2.3.1.97"/>
    </reaction>
</comment>
<comment type="subunit">
    <text evidence="1">Monomer.</text>
</comment>
<comment type="subcellular location">
    <subcellularLocation>
        <location evidence="1">Cytoplasm</location>
    </subcellularLocation>
</comment>
<comment type="similarity">
    <text evidence="3">Belongs to the NMT family.</text>
</comment>
<protein>
    <recommendedName>
        <fullName>Glycylpeptide N-tetradecanoyltransferase</fullName>
        <ecNumber>2.3.1.97</ecNumber>
    </recommendedName>
    <alternativeName>
        <fullName>Myristoyl-CoA:protein N-myristoyltransferase</fullName>
        <shortName>NMT</shortName>
    </alternativeName>
    <alternativeName>
        <fullName>Peptide N-myristoyltransferase</fullName>
    </alternativeName>
</protein>
<accession>Q6CMK4</accession>